<dbReference type="EC" id="3.6.4.-" evidence="1"/>
<dbReference type="PIR" id="S33386">
    <property type="entry name" value="S33386"/>
</dbReference>
<dbReference type="SMR" id="Q00215"/>
<dbReference type="GO" id="GO:0005737">
    <property type="term" value="C:cytoplasm"/>
    <property type="evidence" value="ECO:0007669"/>
    <property type="project" value="UniProtKB-KW"/>
</dbReference>
<dbReference type="GO" id="GO:0005856">
    <property type="term" value="C:cytoskeleton"/>
    <property type="evidence" value="ECO:0007669"/>
    <property type="project" value="UniProtKB-SubCell"/>
</dbReference>
<dbReference type="GO" id="GO:0005524">
    <property type="term" value="F:ATP binding"/>
    <property type="evidence" value="ECO:0007669"/>
    <property type="project" value="UniProtKB-KW"/>
</dbReference>
<dbReference type="GO" id="GO:0016787">
    <property type="term" value="F:hydrolase activity"/>
    <property type="evidence" value="ECO:0007669"/>
    <property type="project" value="UniProtKB-KW"/>
</dbReference>
<dbReference type="CDD" id="cd10224">
    <property type="entry name" value="ASKHA_NBD_actin"/>
    <property type="match status" value="1"/>
</dbReference>
<dbReference type="FunFam" id="2.30.36.70:FF:000001">
    <property type="entry name" value="Actin, alpha skeletal muscle"/>
    <property type="match status" value="1"/>
</dbReference>
<dbReference type="FunFam" id="3.30.420.40:FF:000131">
    <property type="entry name" value="Actin, alpha skeletal muscle"/>
    <property type="match status" value="1"/>
</dbReference>
<dbReference type="FunFam" id="3.30.420.40:FF:000291">
    <property type="entry name" value="Actin, alpha skeletal muscle"/>
    <property type="match status" value="1"/>
</dbReference>
<dbReference type="FunFam" id="3.90.640.10:FF:000047">
    <property type="entry name" value="Actin, alpha skeletal muscle"/>
    <property type="match status" value="1"/>
</dbReference>
<dbReference type="FunFam" id="3.30.420.40:FF:000058">
    <property type="entry name" value="Putative actin-related protein 5"/>
    <property type="match status" value="1"/>
</dbReference>
<dbReference type="Gene3D" id="3.30.420.40">
    <property type="match status" value="2"/>
</dbReference>
<dbReference type="Gene3D" id="3.90.640.10">
    <property type="entry name" value="Actin, Chain A, domain 4"/>
    <property type="match status" value="1"/>
</dbReference>
<dbReference type="InterPro" id="IPR004000">
    <property type="entry name" value="Actin"/>
</dbReference>
<dbReference type="InterPro" id="IPR020902">
    <property type="entry name" value="Actin/actin-like_CS"/>
</dbReference>
<dbReference type="InterPro" id="IPR004001">
    <property type="entry name" value="Actin_CS"/>
</dbReference>
<dbReference type="InterPro" id="IPR043129">
    <property type="entry name" value="ATPase_NBD"/>
</dbReference>
<dbReference type="PANTHER" id="PTHR11937">
    <property type="entry name" value="ACTIN"/>
    <property type="match status" value="1"/>
</dbReference>
<dbReference type="Pfam" id="PF00022">
    <property type="entry name" value="Actin"/>
    <property type="match status" value="1"/>
</dbReference>
<dbReference type="PRINTS" id="PR00190">
    <property type="entry name" value="ACTIN"/>
</dbReference>
<dbReference type="SMART" id="SM00268">
    <property type="entry name" value="ACTIN"/>
    <property type="match status" value="1"/>
</dbReference>
<dbReference type="SUPFAM" id="SSF53067">
    <property type="entry name" value="Actin-like ATPase domain"/>
    <property type="match status" value="2"/>
</dbReference>
<dbReference type="PROSITE" id="PS00406">
    <property type="entry name" value="ACTINS_1"/>
    <property type="match status" value="1"/>
</dbReference>
<dbReference type="PROSITE" id="PS00432">
    <property type="entry name" value="ACTINS_2"/>
    <property type="match status" value="1"/>
</dbReference>
<dbReference type="PROSITE" id="PS01132">
    <property type="entry name" value="ACTINS_ACT_LIKE"/>
    <property type="match status" value="1"/>
</dbReference>
<accession>Q00215</accession>
<keyword id="KW-0067">ATP-binding</keyword>
<keyword id="KW-0963">Cytoplasm</keyword>
<keyword id="KW-0206">Cytoskeleton</keyword>
<keyword id="KW-0378">Hydrolase</keyword>
<keyword id="KW-0547">Nucleotide-binding</keyword>
<protein>
    <recommendedName>
        <fullName>Actin, cytoplasmic</fullName>
        <ecNumber evidence="1">3.6.4.-</ecNumber>
    </recommendedName>
</protein>
<feature type="chain" id="PRO_0000089030" description="Actin, cytoplasmic">
    <location>
        <begin position="1"/>
        <end position="375"/>
    </location>
</feature>
<reference key="1">
    <citation type="journal article" date="1993" name="J. Mol. Evol.">
        <title>Evolution of the chordate muscle actin gene.</title>
        <authorList>
            <person name="Kovilur S."/>
            <person name="Jacobson J.W."/>
            <person name="Beach R.L."/>
            <person name="Jeffery W.R."/>
            <person name="Tomlinson C.R."/>
        </authorList>
    </citation>
    <scope>NUCLEOTIDE SEQUENCE</scope>
</reference>
<comment type="function">
    <text>Actins are highly conserved proteins that are involved in various types of cell motility and are ubiquitously expressed in all eukaryotic cells.</text>
</comment>
<comment type="catalytic activity">
    <reaction evidence="1">
        <text>ATP + H2O = ADP + phosphate + H(+)</text>
        <dbReference type="Rhea" id="RHEA:13065"/>
        <dbReference type="ChEBI" id="CHEBI:15377"/>
        <dbReference type="ChEBI" id="CHEBI:15378"/>
        <dbReference type="ChEBI" id="CHEBI:30616"/>
        <dbReference type="ChEBI" id="CHEBI:43474"/>
        <dbReference type="ChEBI" id="CHEBI:456216"/>
    </reaction>
</comment>
<comment type="subunit">
    <text>Polymerization of globular actin (G-actin) leads to a structural filament (F-actin) in the form of a two-stranded helix. Each actin can bind to 4 others.</text>
</comment>
<comment type="subcellular location">
    <subcellularLocation>
        <location>Cytoplasm</location>
        <location>Cytoskeleton</location>
    </subcellularLocation>
</comment>
<comment type="similarity">
    <text evidence="2">Belongs to the actin family.</text>
</comment>
<name>ACTC_STYPL</name>
<sequence>MDDEVAALVVDNGSGMCKAGFAEDDAPRAVFPSIVGRPRHQGVMVGMVQKDSYVGDEAQSKRGILTLKYPIEHGIVTNWDDMEKIWHHTFYNELRVAPEEHPVLLTEAPLNPKANREKMTQIMFETFNTRAMYVNIQAVLSLYASGRTTGLVMDSGDGVSHTVPIYEGYALPHAIFRLDLAGRDLTDYLMKILTERGYSFTTTAEREIVRDIKEKLCYVGLDFESEMGTASSSSVLEKSYELPDGQVITIGNERFRCPEAMFQPSFLGMESAGIHETTYNSIMKCDVDIRKDLYANTVLSGGTTMYPGIADRMQKEISALAPPTMKIKIIAPPERKYSVWIGGSILASLSTFQQMWISKQEYDESGPSIVHRKCF</sequence>
<proteinExistence type="inferred from homology"/>
<organism>
    <name type="scientific">Styela plicata</name>
    <name type="common">Wrinkled sea squirt</name>
    <name type="synonym">Ascidia plicata</name>
    <dbReference type="NCBI Taxonomy" id="7726"/>
    <lineage>
        <taxon>Eukaryota</taxon>
        <taxon>Metazoa</taxon>
        <taxon>Chordata</taxon>
        <taxon>Tunicata</taxon>
        <taxon>Ascidiacea</taxon>
        <taxon>Stolidobranchia</taxon>
        <taxon>Styelidae</taxon>
        <taxon>Styela</taxon>
    </lineage>
</organism>
<evidence type="ECO:0000250" key="1">
    <source>
        <dbReference type="UniProtKB" id="P68137"/>
    </source>
</evidence>
<evidence type="ECO:0000305" key="2"/>